<proteinExistence type="inferred from homology"/>
<gene>
    <name type="primary">epl1</name>
    <name type="ORF">AFUA_6G04530</name>
</gene>
<feature type="chain" id="PRO_0000214156" description="Enhancer of polycomb-like protein 1">
    <location>
        <begin position="1"/>
        <end position="582"/>
    </location>
</feature>
<feature type="region of interest" description="Disordered" evidence="3">
    <location>
        <begin position="323"/>
        <end position="351"/>
    </location>
</feature>
<feature type="region of interest" description="Disordered" evidence="3">
    <location>
        <begin position="539"/>
        <end position="582"/>
    </location>
</feature>
<feature type="coiled-coil region" evidence="2">
    <location>
        <begin position="238"/>
        <end position="295"/>
    </location>
</feature>
<feature type="coiled-coil region" evidence="2">
    <location>
        <begin position="352"/>
        <end position="385"/>
    </location>
</feature>
<feature type="compositionally biased region" description="Low complexity" evidence="3">
    <location>
        <begin position="539"/>
        <end position="555"/>
    </location>
</feature>
<reference key="1">
    <citation type="journal article" date="2005" name="Nature">
        <title>Genomic sequence of the pathogenic and allergenic filamentous fungus Aspergillus fumigatus.</title>
        <authorList>
            <person name="Nierman W.C."/>
            <person name="Pain A."/>
            <person name="Anderson M.J."/>
            <person name="Wortman J.R."/>
            <person name="Kim H.S."/>
            <person name="Arroyo J."/>
            <person name="Berriman M."/>
            <person name="Abe K."/>
            <person name="Archer D.B."/>
            <person name="Bermejo C."/>
            <person name="Bennett J.W."/>
            <person name="Bowyer P."/>
            <person name="Chen D."/>
            <person name="Collins M."/>
            <person name="Coulsen R."/>
            <person name="Davies R."/>
            <person name="Dyer P.S."/>
            <person name="Farman M.L."/>
            <person name="Fedorova N."/>
            <person name="Fedorova N.D."/>
            <person name="Feldblyum T.V."/>
            <person name="Fischer R."/>
            <person name="Fosker N."/>
            <person name="Fraser A."/>
            <person name="Garcia J.L."/>
            <person name="Garcia M.J."/>
            <person name="Goble A."/>
            <person name="Goldman G.H."/>
            <person name="Gomi K."/>
            <person name="Griffith-Jones S."/>
            <person name="Gwilliam R."/>
            <person name="Haas B.J."/>
            <person name="Haas H."/>
            <person name="Harris D.E."/>
            <person name="Horiuchi H."/>
            <person name="Huang J."/>
            <person name="Humphray S."/>
            <person name="Jimenez J."/>
            <person name="Keller N."/>
            <person name="Khouri H."/>
            <person name="Kitamoto K."/>
            <person name="Kobayashi T."/>
            <person name="Konzack S."/>
            <person name="Kulkarni R."/>
            <person name="Kumagai T."/>
            <person name="Lafton A."/>
            <person name="Latge J.-P."/>
            <person name="Li W."/>
            <person name="Lord A."/>
            <person name="Lu C."/>
            <person name="Majoros W.H."/>
            <person name="May G.S."/>
            <person name="Miller B.L."/>
            <person name="Mohamoud Y."/>
            <person name="Molina M."/>
            <person name="Monod M."/>
            <person name="Mouyna I."/>
            <person name="Mulligan S."/>
            <person name="Murphy L.D."/>
            <person name="O'Neil S."/>
            <person name="Paulsen I."/>
            <person name="Penalva M.A."/>
            <person name="Pertea M."/>
            <person name="Price C."/>
            <person name="Pritchard B.L."/>
            <person name="Quail M.A."/>
            <person name="Rabbinowitsch E."/>
            <person name="Rawlins N."/>
            <person name="Rajandream M.A."/>
            <person name="Reichard U."/>
            <person name="Renauld H."/>
            <person name="Robson G.D."/>
            <person name="Rodriguez de Cordoba S."/>
            <person name="Rodriguez-Pena J.M."/>
            <person name="Ronning C.M."/>
            <person name="Rutter S."/>
            <person name="Salzberg S.L."/>
            <person name="Sanchez M."/>
            <person name="Sanchez-Ferrero J.C."/>
            <person name="Saunders D."/>
            <person name="Seeger K."/>
            <person name="Squares R."/>
            <person name="Squares S."/>
            <person name="Takeuchi M."/>
            <person name="Tekaia F."/>
            <person name="Turner G."/>
            <person name="Vazquez de Aldana C.R."/>
            <person name="Weidman J."/>
            <person name="White O."/>
            <person name="Woodward J.R."/>
            <person name="Yu J.-H."/>
            <person name="Fraser C.M."/>
            <person name="Galagan J.E."/>
            <person name="Asai K."/>
            <person name="Machida M."/>
            <person name="Hall N."/>
            <person name="Barrell B.G."/>
            <person name="Denning D.W."/>
        </authorList>
    </citation>
    <scope>NUCLEOTIDE SEQUENCE [LARGE SCALE GENOMIC DNA]</scope>
    <source>
        <strain>ATCC MYA-4609 / CBS 101355 / FGSC A1100 / Af293</strain>
    </source>
</reference>
<sequence length="582" mass="66417">MGRTRPKKLTSKASIPIVREHEIDIIDDEVQNALQQVETGVEKAEESEFHLQAAISATAQGKVNEAHIPTPETVLSNLRYDELYPPIFSQPATYIRFSSTIEDCCGCPYNMTEEDDVFFKIMNEKREPSNRITEDQFEEVMYFFEETAQTKQPFAAVDSPPVLSFAEMQDSMDATVEESVKCFAKDIYEHWKLRRIATGNRPLLPSLKFETGQDTDDTDPYVCFRRREVRQIRKTRGRDAQSADKLRRLRKELEDARQLVALVRQRELARKEMLSMERQIFLQRSEVKEMKRKLNIKDDDEDLINQKVTSIPARLPHAFANLPEQPKKKPAEAPAAQRPTAPQIRMPQKPGTQAADDMQLLEDVQAEKENEILRDIKQNIAKHIKWNEGYVDYTRAPLSPPPEKTFQAAFRPAITTQLPTPPSSDSSDNMMLESALDTANSLSFRDKLVPRTWEMNEDTCRIPSFRRRIGRGGRLMIDRRNMASRCRIEMDPLKADRFKYDREDSDDESEFECDPYDVQIMQHRAIMAAKARDQAAAAAQAHAQAQAQKRLQAEQTTTNNGPPNIGHTMGSNPGPGAVASTS</sequence>
<protein>
    <recommendedName>
        <fullName>Enhancer of polycomb-like protein 1</fullName>
    </recommendedName>
</protein>
<evidence type="ECO:0000250" key="1"/>
<evidence type="ECO:0000255" key="2"/>
<evidence type="ECO:0000256" key="3">
    <source>
        <dbReference type="SAM" id="MobiDB-lite"/>
    </source>
</evidence>
<evidence type="ECO:0000305" key="4"/>
<dbReference type="EMBL" id="AAHF01000012">
    <property type="protein sequence ID" value="EAL85587.1"/>
    <property type="molecule type" value="Genomic_DNA"/>
</dbReference>
<dbReference type="RefSeq" id="XP_747625.1">
    <property type="nucleotide sequence ID" value="XM_742532.1"/>
</dbReference>
<dbReference type="SMR" id="Q4WDF1"/>
<dbReference type="STRING" id="330879.Q4WDF1"/>
<dbReference type="EnsemblFungi" id="EAL85587">
    <property type="protein sequence ID" value="EAL85587"/>
    <property type="gene ID" value="AFUA_6G04530"/>
</dbReference>
<dbReference type="GeneID" id="3505203"/>
<dbReference type="KEGG" id="afm:AFUA_6G04530"/>
<dbReference type="eggNOG" id="KOG2261">
    <property type="taxonomic scope" value="Eukaryota"/>
</dbReference>
<dbReference type="HOGENOM" id="CLU_010580_1_0_1"/>
<dbReference type="InParanoid" id="Q4WDF1"/>
<dbReference type="OMA" id="HIKWNEG"/>
<dbReference type="OrthoDB" id="435275at2759"/>
<dbReference type="Proteomes" id="UP000002530">
    <property type="component" value="Chromosome 6"/>
</dbReference>
<dbReference type="GO" id="GO:0035267">
    <property type="term" value="C:NuA4 histone acetyltransferase complex"/>
    <property type="evidence" value="ECO:0007669"/>
    <property type="project" value="InterPro"/>
</dbReference>
<dbReference type="GO" id="GO:0005634">
    <property type="term" value="C:nucleus"/>
    <property type="evidence" value="ECO:0007669"/>
    <property type="project" value="UniProtKB-SubCell"/>
</dbReference>
<dbReference type="GO" id="GO:0032777">
    <property type="term" value="C:piccolo histone acetyltransferase complex"/>
    <property type="evidence" value="ECO:0000318"/>
    <property type="project" value="GO_Central"/>
</dbReference>
<dbReference type="GO" id="GO:0006281">
    <property type="term" value="P:DNA repair"/>
    <property type="evidence" value="ECO:0007669"/>
    <property type="project" value="UniProtKB-KW"/>
</dbReference>
<dbReference type="GO" id="GO:0006357">
    <property type="term" value="P:regulation of transcription by RNA polymerase II"/>
    <property type="evidence" value="ECO:0000318"/>
    <property type="project" value="GO_Central"/>
</dbReference>
<dbReference type="InterPro" id="IPR024943">
    <property type="entry name" value="Enhancer_polycomb"/>
</dbReference>
<dbReference type="InterPro" id="IPR019542">
    <property type="entry name" value="Enhancer_polycomb-like_N"/>
</dbReference>
<dbReference type="PANTHER" id="PTHR14898">
    <property type="entry name" value="ENHANCER OF POLYCOMB"/>
    <property type="match status" value="1"/>
</dbReference>
<dbReference type="Pfam" id="PF10513">
    <property type="entry name" value="EPL1"/>
    <property type="match status" value="1"/>
</dbReference>
<comment type="function">
    <text evidence="1">Component of the NuA4 histone acetyltransferase complex which is involved in transcriptional activation of selected genes principally by acetylation of nucleosomal histone H4 and H2A. The NuA4 complex is also involved in DNA repair. Involved in gene silencing by neighboring heterochromatin, blockage of the silencing spreading along the chromosome, and required for cell cycle progression through G2/M (By similarity).</text>
</comment>
<comment type="subunit">
    <text evidence="1">Component of the NuA4 histone acetyltransferase complex.</text>
</comment>
<comment type="subcellular location">
    <subcellularLocation>
        <location evidence="1">Nucleus</location>
    </subcellularLocation>
</comment>
<comment type="similarity">
    <text evidence="4">Belongs to the enhancer of polycomb family.</text>
</comment>
<accession>Q4WDF1</accession>
<name>EPL1_ASPFU</name>
<organism>
    <name type="scientific">Aspergillus fumigatus (strain ATCC MYA-4609 / CBS 101355 / FGSC A1100 / Af293)</name>
    <name type="common">Neosartorya fumigata</name>
    <dbReference type="NCBI Taxonomy" id="330879"/>
    <lineage>
        <taxon>Eukaryota</taxon>
        <taxon>Fungi</taxon>
        <taxon>Dikarya</taxon>
        <taxon>Ascomycota</taxon>
        <taxon>Pezizomycotina</taxon>
        <taxon>Eurotiomycetes</taxon>
        <taxon>Eurotiomycetidae</taxon>
        <taxon>Eurotiales</taxon>
        <taxon>Aspergillaceae</taxon>
        <taxon>Aspergillus</taxon>
        <taxon>Aspergillus subgen. Fumigati</taxon>
    </lineage>
</organism>
<keyword id="KW-0131">Cell cycle</keyword>
<keyword id="KW-0175">Coiled coil</keyword>
<keyword id="KW-0227">DNA damage</keyword>
<keyword id="KW-0234">DNA repair</keyword>
<keyword id="KW-0539">Nucleus</keyword>
<keyword id="KW-1185">Reference proteome</keyword>
<keyword id="KW-0804">Transcription</keyword>
<keyword id="KW-0805">Transcription regulation</keyword>